<sequence length="76" mass="8698">MAVEKFETALKKLEDVVRKLEGGDLSLDDSLKAFEEGVKMASFCTKKLDEAEKKVELLLKKKDGTFVREDFRLDDE</sequence>
<reference key="1">
    <citation type="journal article" date="2003" name="Science">
        <title>Genome of Geobacter sulfurreducens: metal reduction in subsurface environments.</title>
        <authorList>
            <person name="Methe B.A."/>
            <person name="Nelson K.E."/>
            <person name="Eisen J.A."/>
            <person name="Paulsen I.T."/>
            <person name="Nelson W.C."/>
            <person name="Heidelberg J.F."/>
            <person name="Wu D."/>
            <person name="Wu M."/>
            <person name="Ward N.L."/>
            <person name="Beanan M.J."/>
            <person name="Dodson R.J."/>
            <person name="Madupu R."/>
            <person name="Brinkac L.M."/>
            <person name="Daugherty S.C."/>
            <person name="DeBoy R.T."/>
            <person name="Durkin A.S."/>
            <person name="Gwinn M.L."/>
            <person name="Kolonay J.F."/>
            <person name="Sullivan S.A."/>
            <person name="Haft D.H."/>
            <person name="Selengut J."/>
            <person name="Davidsen T.M."/>
            <person name="Zafar N."/>
            <person name="White O."/>
            <person name="Tran B."/>
            <person name="Romero C."/>
            <person name="Forberger H.A."/>
            <person name="Weidman J.F."/>
            <person name="Khouri H.M."/>
            <person name="Feldblyum T.V."/>
            <person name="Utterback T.R."/>
            <person name="Van Aken S.E."/>
            <person name="Lovley D.R."/>
            <person name="Fraser C.M."/>
        </authorList>
    </citation>
    <scope>NUCLEOTIDE SEQUENCE [LARGE SCALE GENOMIC DNA]</scope>
    <source>
        <strain>ATCC 51573 / DSM 12127 / PCA</strain>
    </source>
</reference>
<comment type="function">
    <text evidence="1">Bidirectionally degrades single-stranded DNA into large acid-insoluble oligonucleotides, which are then degraded further into small acid-soluble oligonucleotides.</text>
</comment>
<comment type="catalytic activity">
    <reaction evidence="1">
        <text>Exonucleolytic cleavage in either 5'- to 3'- or 3'- to 5'-direction to yield nucleoside 5'-phosphates.</text>
        <dbReference type="EC" id="3.1.11.6"/>
    </reaction>
</comment>
<comment type="subunit">
    <text evidence="1">Heterooligomer composed of large and small subunits.</text>
</comment>
<comment type="subcellular location">
    <subcellularLocation>
        <location evidence="1">Cytoplasm</location>
    </subcellularLocation>
</comment>
<comment type="similarity">
    <text evidence="1">Belongs to the XseB family.</text>
</comment>
<accession>Q74CA8</accession>
<name>EX7S_GEOSL</name>
<dbReference type="EC" id="3.1.11.6" evidence="1"/>
<dbReference type="EMBL" id="AE017180">
    <property type="protein sequence ID" value="AAR35143.1"/>
    <property type="molecule type" value="Genomic_DNA"/>
</dbReference>
<dbReference type="RefSeq" id="NP_952816.1">
    <property type="nucleotide sequence ID" value="NC_002939.5"/>
</dbReference>
<dbReference type="RefSeq" id="WP_010942410.1">
    <property type="nucleotide sequence ID" value="NC_002939.5"/>
</dbReference>
<dbReference type="SMR" id="Q74CA8"/>
<dbReference type="FunCoup" id="Q74CA8">
    <property type="interactions" value="373"/>
</dbReference>
<dbReference type="STRING" id="243231.GSU1766"/>
<dbReference type="EnsemblBacteria" id="AAR35143">
    <property type="protein sequence ID" value="AAR35143"/>
    <property type="gene ID" value="GSU1766"/>
</dbReference>
<dbReference type="KEGG" id="gsu:GSU1766"/>
<dbReference type="PATRIC" id="fig|243231.5.peg.1805"/>
<dbReference type="eggNOG" id="COG1722">
    <property type="taxonomic scope" value="Bacteria"/>
</dbReference>
<dbReference type="HOGENOM" id="CLU_145918_3_3_7"/>
<dbReference type="InParanoid" id="Q74CA8"/>
<dbReference type="Proteomes" id="UP000000577">
    <property type="component" value="Chromosome"/>
</dbReference>
<dbReference type="GO" id="GO:0005829">
    <property type="term" value="C:cytosol"/>
    <property type="evidence" value="ECO:0000318"/>
    <property type="project" value="GO_Central"/>
</dbReference>
<dbReference type="GO" id="GO:0009318">
    <property type="term" value="C:exodeoxyribonuclease VII complex"/>
    <property type="evidence" value="ECO:0007669"/>
    <property type="project" value="InterPro"/>
</dbReference>
<dbReference type="GO" id="GO:0008855">
    <property type="term" value="F:exodeoxyribonuclease VII activity"/>
    <property type="evidence" value="ECO:0000318"/>
    <property type="project" value="GO_Central"/>
</dbReference>
<dbReference type="GO" id="GO:0006308">
    <property type="term" value="P:DNA catabolic process"/>
    <property type="evidence" value="ECO:0007669"/>
    <property type="project" value="UniProtKB-UniRule"/>
</dbReference>
<dbReference type="Gene3D" id="1.10.287.1040">
    <property type="entry name" value="Exonuclease VII, small subunit"/>
    <property type="match status" value="1"/>
</dbReference>
<dbReference type="HAMAP" id="MF_00337">
    <property type="entry name" value="Exonuc_7_S"/>
    <property type="match status" value="1"/>
</dbReference>
<dbReference type="InterPro" id="IPR003761">
    <property type="entry name" value="Exonuc_VII_S"/>
</dbReference>
<dbReference type="InterPro" id="IPR037004">
    <property type="entry name" value="Exonuc_VII_ssu_sf"/>
</dbReference>
<dbReference type="NCBIfam" id="NF002140">
    <property type="entry name" value="PRK00977.1-4"/>
    <property type="match status" value="1"/>
</dbReference>
<dbReference type="NCBIfam" id="NF010669">
    <property type="entry name" value="PRK14066.1"/>
    <property type="match status" value="1"/>
</dbReference>
<dbReference type="NCBIfam" id="TIGR01280">
    <property type="entry name" value="xseB"/>
    <property type="match status" value="1"/>
</dbReference>
<dbReference type="PANTHER" id="PTHR34137">
    <property type="entry name" value="EXODEOXYRIBONUCLEASE 7 SMALL SUBUNIT"/>
    <property type="match status" value="1"/>
</dbReference>
<dbReference type="PANTHER" id="PTHR34137:SF1">
    <property type="entry name" value="EXODEOXYRIBONUCLEASE 7 SMALL SUBUNIT"/>
    <property type="match status" value="1"/>
</dbReference>
<dbReference type="Pfam" id="PF02609">
    <property type="entry name" value="Exonuc_VII_S"/>
    <property type="match status" value="1"/>
</dbReference>
<dbReference type="PIRSF" id="PIRSF006488">
    <property type="entry name" value="Exonuc_VII_S"/>
    <property type="match status" value="1"/>
</dbReference>
<dbReference type="SUPFAM" id="SSF116842">
    <property type="entry name" value="XseB-like"/>
    <property type="match status" value="1"/>
</dbReference>
<organism>
    <name type="scientific">Geobacter sulfurreducens (strain ATCC 51573 / DSM 12127 / PCA)</name>
    <dbReference type="NCBI Taxonomy" id="243231"/>
    <lineage>
        <taxon>Bacteria</taxon>
        <taxon>Pseudomonadati</taxon>
        <taxon>Thermodesulfobacteriota</taxon>
        <taxon>Desulfuromonadia</taxon>
        <taxon>Geobacterales</taxon>
        <taxon>Geobacteraceae</taxon>
        <taxon>Geobacter</taxon>
    </lineage>
</organism>
<keyword id="KW-0963">Cytoplasm</keyword>
<keyword id="KW-0269">Exonuclease</keyword>
<keyword id="KW-0378">Hydrolase</keyword>
<keyword id="KW-0540">Nuclease</keyword>
<keyword id="KW-1185">Reference proteome</keyword>
<gene>
    <name evidence="1" type="primary">xseB</name>
    <name type="ordered locus">GSU1766</name>
</gene>
<feature type="chain" id="PRO_0000206950" description="Exodeoxyribonuclease 7 small subunit">
    <location>
        <begin position="1"/>
        <end position="76"/>
    </location>
</feature>
<proteinExistence type="inferred from homology"/>
<evidence type="ECO:0000255" key="1">
    <source>
        <dbReference type="HAMAP-Rule" id="MF_00337"/>
    </source>
</evidence>
<protein>
    <recommendedName>
        <fullName evidence="1">Exodeoxyribonuclease 7 small subunit</fullName>
        <ecNumber evidence="1">3.1.11.6</ecNumber>
    </recommendedName>
    <alternativeName>
        <fullName evidence="1">Exodeoxyribonuclease VII small subunit</fullName>
        <shortName evidence="1">Exonuclease VII small subunit</shortName>
    </alternativeName>
</protein>